<accession>Q5PBG7</accession>
<gene>
    <name evidence="1" type="primary">rplA</name>
    <name type="ordered locus">AM259</name>
</gene>
<keyword id="KW-0678">Repressor</keyword>
<keyword id="KW-0687">Ribonucleoprotein</keyword>
<keyword id="KW-0689">Ribosomal protein</keyword>
<keyword id="KW-0694">RNA-binding</keyword>
<keyword id="KW-0699">rRNA-binding</keyword>
<keyword id="KW-0810">Translation regulation</keyword>
<keyword id="KW-0820">tRNA-binding</keyword>
<dbReference type="EMBL" id="CP000030">
    <property type="protein sequence ID" value="AAV86362.1"/>
    <property type="molecule type" value="Genomic_DNA"/>
</dbReference>
<dbReference type="RefSeq" id="WP_041659972.1">
    <property type="nucleotide sequence ID" value="NC_004842.2"/>
</dbReference>
<dbReference type="SMR" id="Q5PBG7"/>
<dbReference type="KEGG" id="ama:AM259"/>
<dbReference type="HOGENOM" id="CLU_062853_0_0_5"/>
<dbReference type="GO" id="GO:0015934">
    <property type="term" value="C:large ribosomal subunit"/>
    <property type="evidence" value="ECO:0007669"/>
    <property type="project" value="InterPro"/>
</dbReference>
<dbReference type="GO" id="GO:0019843">
    <property type="term" value="F:rRNA binding"/>
    <property type="evidence" value="ECO:0007669"/>
    <property type="project" value="UniProtKB-UniRule"/>
</dbReference>
<dbReference type="GO" id="GO:0003735">
    <property type="term" value="F:structural constituent of ribosome"/>
    <property type="evidence" value="ECO:0007669"/>
    <property type="project" value="InterPro"/>
</dbReference>
<dbReference type="GO" id="GO:0000049">
    <property type="term" value="F:tRNA binding"/>
    <property type="evidence" value="ECO:0007669"/>
    <property type="project" value="UniProtKB-KW"/>
</dbReference>
<dbReference type="GO" id="GO:0006417">
    <property type="term" value="P:regulation of translation"/>
    <property type="evidence" value="ECO:0007669"/>
    <property type="project" value="UniProtKB-KW"/>
</dbReference>
<dbReference type="GO" id="GO:0006412">
    <property type="term" value="P:translation"/>
    <property type="evidence" value="ECO:0007669"/>
    <property type="project" value="UniProtKB-UniRule"/>
</dbReference>
<dbReference type="CDD" id="cd00403">
    <property type="entry name" value="Ribosomal_L1"/>
    <property type="match status" value="1"/>
</dbReference>
<dbReference type="FunFam" id="3.40.50.790:FF:000001">
    <property type="entry name" value="50S ribosomal protein L1"/>
    <property type="match status" value="1"/>
</dbReference>
<dbReference type="Gene3D" id="3.30.190.20">
    <property type="match status" value="1"/>
</dbReference>
<dbReference type="Gene3D" id="3.40.50.790">
    <property type="match status" value="1"/>
</dbReference>
<dbReference type="HAMAP" id="MF_01318_B">
    <property type="entry name" value="Ribosomal_uL1_B"/>
    <property type="match status" value="1"/>
</dbReference>
<dbReference type="InterPro" id="IPR005878">
    <property type="entry name" value="Ribosom_uL1_bac-type"/>
</dbReference>
<dbReference type="InterPro" id="IPR002143">
    <property type="entry name" value="Ribosomal_uL1"/>
</dbReference>
<dbReference type="InterPro" id="IPR023674">
    <property type="entry name" value="Ribosomal_uL1-like"/>
</dbReference>
<dbReference type="InterPro" id="IPR028364">
    <property type="entry name" value="Ribosomal_uL1/biogenesis"/>
</dbReference>
<dbReference type="InterPro" id="IPR016095">
    <property type="entry name" value="Ribosomal_uL1_3-a/b-sand"/>
</dbReference>
<dbReference type="InterPro" id="IPR023673">
    <property type="entry name" value="Ribosomal_uL1_CS"/>
</dbReference>
<dbReference type="NCBIfam" id="TIGR01169">
    <property type="entry name" value="rplA_bact"/>
    <property type="match status" value="1"/>
</dbReference>
<dbReference type="PANTHER" id="PTHR36427">
    <property type="entry name" value="54S RIBOSOMAL PROTEIN L1, MITOCHONDRIAL"/>
    <property type="match status" value="1"/>
</dbReference>
<dbReference type="PANTHER" id="PTHR36427:SF3">
    <property type="entry name" value="LARGE RIBOSOMAL SUBUNIT PROTEIN UL1M"/>
    <property type="match status" value="1"/>
</dbReference>
<dbReference type="Pfam" id="PF00687">
    <property type="entry name" value="Ribosomal_L1"/>
    <property type="match status" value="1"/>
</dbReference>
<dbReference type="PIRSF" id="PIRSF002155">
    <property type="entry name" value="Ribosomal_L1"/>
    <property type="match status" value="1"/>
</dbReference>
<dbReference type="SUPFAM" id="SSF56808">
    <property type="entry name" value="Ribosomal protein L1"/>
    <property type="match status" value="1"/>
</dbReference>
<dbReference type="PROSITE" id="PS01199">
    <property type="entry name" value="RIBOSOMAL_L1"/>
    <property type="match status" value="1"/>
</dbReference>
<protein>
    <recommendedName>
        <fullName evidence="1">Large ribosomal subunit protein uL1</fullName>
    </recommendedName>
    <alternativeName>
        <fullName evidence="2">50S ribosomal protein L1</fullName>
    </alternativeName>
</protein>
<name>RL1_ANAMM</name>
<reference key="1">
    <citation type="journal article" date="2005" name="Proc. Natl. Acad. Sci. U.S.A.">
        <title>Complete genome sequencing of Anaplasma marginale reveals that the surface is skewed to two superfamilies of outer membrane proteins.</title>
        <authorList>
            <person name="Brayton K.A."/>
            <person name="Kappmeyer L.S."/>
            <person name="Herndon D.R."/>
            <person name="Dark M.J."/>
            <person name="Tibbals D.L."/>
            <person name="Palmer G.H."/>
            <person name="McGuire T.C."/>
            <person name="Knowles D.P. Jr."/>
        </authorList>
    </citation>
    <scope>NUCLEOTIDE SEQUENCE [LARGE SCALE GENOMIC DNA]</scope>
    <source>
        <strain>St. Maries</strain>
    </source>
</reference>
<sequence>MSGDGSCSYSAEEGIRELLQSAKAKFRESVDVAIKLSVADSKSGESIRGAVVLPKGLGREVRVAVFAKGEHAKQASSAGADVVGDEELIEEIKKGRRLDVDWCIATPDFMPQISAIAKILGPRGLMPNPKFGTVTLELAEMVGIIKSGQVKFKSDRYGIVHVKIGDIGFTPEDLLENFNAVVAAVQGLRPTTIKGSYVRGVFVNSTMGRSFRIAGTG</sequence>
<proteinExistence type="inferred from homology"/>
<evidence type="ECO:0000255" key="1">
    <source>
        <dbReference type="HAMAP-Rule" id="MF_01318"/>
    </source>
</evidence>
<evidence type="ECO:0000305" key="2"/>
<comment type="function">
    <text evidence="1">Binds directly to 23S rRNA. The L1 stalk is quite mobile in the ribosome, and is involved in E site tRNA release.</text>
</comment>
<comment type="function">
    <text evidence="1">Protein L1 is also a translational repressor protein, it controls the translation of the L11 operon by binding to its mRNA.</text>
</comment>
<comment type="subunit">
    <text evidence="1">Part of the 50S ribosomal subunit.</text>
</comment>
<comment type="similarity">
    <text evidence="1">Belongs to the universal ribosomal protein uL1 family.</text>
</comment>
<organism>
    <name type="scientific">Anaplasma marginale (strain St. Maries)</name>
    <dbReference type="NCBI Taxonomy" id="234826"/>
    <lineage>
        <taxon>Bacteria</taxon>
        <taxon>Pseudomonadati</taxon>
        <taxon>Pseudomonadota</taxon>
        <taxon>Alphaproteobacteria</taxon>
        <taxon>Rickettsiales</taxon>
        <taxon>Anaplasmataceae</taxon>
        <taxon>Anaplasma</taxon>
    </lineage>
</organism>
<feature type="chain" id="PRO_0000307647" description="Large ribosomal subunit protein uL1">
    <location>
        <begin position="1"/>
        <end position="217"/>
    </location>
</feature>